<evidence type="ECO:0000250" key="1">
    <source>
        <dbReference type="UniProtKB" id="P83559"/>
    </source>
</evidence>
<evidence type="ECO:0000255" key="2"/>
<evidence type="ECO:0000269" key="3">
    <source>
    </source>
</evidence>
<evidence type="ECO:0000305" key="4"/>
<evidence type="ECO:0000305" key="5">
    <source>
    </source>
</evidence>
<protein>
    <recommendedName>
        <fullName evidence="4">U1-plectoxin-Pt1c</fullName>
        <shortName evidence="4">U1-PLTX-Pt1c</shortName>
    </recommendedName>
    <alternativeName>
        <fullName>Plectoxin XI</fullName>
        <shortName>PLT-XI</shortName>
        <shortName>PLTXI</shortName>
    </alternativeName>
    <alternativeName>
        <fullName>Plectoxin-11</fullName>
    </alternativeName>
</protein>
<organism>
    <name type="scientific">Plectreurys tristis</name>
    <name type="common">Spider</name>
    <name type="synonym">Plectreurys bispinosus</name>
    <dbReference type="NCBI Taxonomy" id="33319"/>
    <lineage>
        <taxon>Eukaryota</taxon>
        <taxon>Metazoa</taxon>
        <taxon>Ecdysozoa</taxon>
        <taxon>Arthropoda</taxon>
        <taxon>Chelicerata</taxon>
        <taxon>Arachnida</taxon>
        <taxon>Araneae</taxon>
        <taxon>Araneomorphae</taxon>
        <taxon>Haplogynae</taxon>
        <taxon>Pholcoidea</taxon>
        <taxon>Plectreuridae</taxon>
        <taxon>Plectreurys</taxon>
    </lineage>
</organism>
<name>TX22C_PLETR</name>
<comment type="function">
    <text>Potent toxin that may paralyze and/or kill insect pests such as H.virescens (lepidoptera), S.exigua (beet armyworm) and M.sexta (tobacco hornworm).</text>
</comment>
<comment type="subcellular location">
    <subcellularLocation>
        <location evidence="3">Secreted</location>
    </subcellularLocation>
</comment>
<comment type="tissue specificity">
    <text evidence="5">Expressed by the venom gland.</text>
</comment>
<comment type="domain">
    <text evidence="4">The presence of a 'disulfide through disulfide knot' structurally defines this protein as a knottin.</text>
</comment>
<comment type="similarity">
    <text evidence="4">Belongs to the neurotoxin 02 (plectoxin) family. 02 (plectoxin) subfamily.</text>
</comment>
<feature type="signal peptide" evidence="2">
    <location>
        <begin position="1" status="less than"/>
        <end position="18"/>
    </location>
</feature>
<feature type="propeptide" id="PRO_0000035539" evidence="3">
    <location>
        <begin position="19"/>
        <end position="31"/>
    </location>
</feature>
<feature type="chain" id="PRO_0000035540" description="U1-plectoxin-Pt1c" evidence="3">
    <location>
        <begin position="32"/>
        <end position="77"/>
    </location>
</feature>
<feature type="propeptide" id="PRO_0000035541">
    <location>
        <begin position="78"/>
        <end position="79"/>
    </location>
</feature>
<feature type="disulfide bond" evidence="1">
    <location>
        <begin position="35"/>
        <end position="49"/>
    </location>
</feature>
<feature type="disulfide bond" evidence="1">
    <location>
        <begin position="42"/>
        <end position="55"/>
    </location>
</feature>
<feature type="disulfide bond" evidence="1">
    <location>
        <begin position="48"/>
        <end position="66"/>
    </location>
</feature>
<feature type="disulfide bond" evidence="1">
    <location>
        <begin position="52"/>
        <end position="75"/>
    </location>
</feature>
<feature type="disulfide bond" evidence="1">
    <location>
        <begin position="57"/>
        <end position="64"/>
    </location>
</feature>
<feature type="non-terminal residue">
    <location>
        <position position="1"/>
    </location>
</feature>
<dbReference type="EMBL" id="U29270">
    <property type="protein sequence ID" value="AAC47201.1"/>
    <property type="molecule type" value="mRNA"/>
</dbReference>
<dbReference type="PIR" id="C53613">
    <property type="entry name" value="C53613"/>
</dbReference>
<dbReference type="SMR" id="P36985"/>
<dbReference type="ArachnoServer" id="AS000392">
    <property type="toxin name" value="U1-plectoxin-Pt1c"/>
</dbReference>
<dbReference type="GO" id="GO:0005576">
    <property type="term" value="C:extracellular region"/>
    <property type="evidence" value="ECO:0007669"/>
    <property type="project" value="UniProtKB-SubCell"/>
</dbReference>
<dbReference type="GO" id="GO:0008200">
    <property type="term" value="F:ion channel inhibitor activity"/>
    <property type="evidence" value="ECO:0007669"/>
    <property type="project" value="InterPro"/>
</dbReference>
<dbReference type="GO" id="GO:0090729">
    <property type="term" value="F:toxin activity"/>
    <property type="evidence" value="ECO:0007669"/>
    <property type="project" value="UniProtKB-KW"/>
</dbReference>
<dbReference type="InterPro" id="IPR004169">
    <property type="entry name" value="Spidertoxin"/>
</dbReference>
<dbReference type="Pfam" id="PF02819">
    <property type="entry name" value="Toxin_9"/>
    <property type="match status" value="1"/>
</dbReference>
<accession>P36985</accession>
<sequence length="79" mass="8909">HLILASALICALVVCTFAEEQVNVPFLPDEREVKCIGWQEYCRGNLPCCDDCVMCECNIMGQNCRCNHPRITSECGSRR</sequence>
<proteinExistence type="evidence at protein level"/>
<reference key="1">
    <citation type="journal article" date="1996" name="Insect Biochem. Mol. Biol.">
        <title>Molecular cloning and sequencing of cDNAs encoding insecticidal peptides from the primitive hunting spider, Plectreurys tristis (Simon).</title>
        <authorList>
            <person name="Leisy D.J."/>
            <person name="Mattson J.D."/>
            <person name="Quistad G.B."/>
            <person name="Kramer S.J."/>
            <person name="van Beek N."/>
            <person name="Tsai L.W."/>
            <person name="Enderlin F.E."/>
            <person name="Woodworth A.R."/>
            <person name="Digan M.E."/>
        </authorList>
    </citation>
    <scope>NUCLEOTIDE SEQUENCE [MRNA]</scope>
    <source>
        <tissue>Venom gland</tissue>
    </source>
</reference>
<reference key="2">
    <citation type="journal article" date="1994" name="J. Biol. Chem.">
        <title>Isolation and sequencing of insecticidal peptides from the primitive hunting spider, Plectreurys tristis (Simon).</title>
        <authorList>
            <person name="Quistad G.B."/>
            <person name="Skinner W.S."/>
        </authorList>
    </citation>
    <scope>PROTEIN SEQUENCE OF 32-77</scope>
    <scope>SUBCELLULAR LOCATION</scope>
    <source>
        <tissue>Venom</tissue>
    </source>
</reference>
<keyword id="KW-0903">Direct protein sequencing</keyword>
<keyword id="KW-1015">Disulfide bond</keyword>
<keyword id="KW-0960">Knottin</keyword>
<keyword id="KW-0528">Neurotoxin</keyword>
<keyword id="KW-0964">Secreted</keyword>
<keyword id="KW-0732">Signal</keyword>
<keyword id="KW-0800">Toxin</keyword>